<dbReference type="EC" id="2.5.1.39" evidence="1"/>
<dbReference type="EMBL" id="AB052553">
    <property type="protein sequence ID" value="BAB20818.2"/>
    <property type="molecule type" value="mRNA"/>
</dbReference>
<dbReference type="EMBL" id="AL035394">
    <property type="protein sequence ID" value="CAA23032.1"/>
    <property type="status" value="ALT_SEQ"/>
    <property type="molecule type" value="Genomic_DNA"/>
</dbReference>
<dbReference type="EMBL" id="AL161559">
    <property type="protein sequence ID" value="CAB79321.1"/>
    <property type="status" value="ALT_SEQ"/>
    <property type="molecule type" value="Genomic_DNA"/>
</dbReference>
<dbReference type="EMBL" id="CP002687">
    <property type="protein sequence ID" value="AEE84790.1"/>
    <property type="molecule type" value="Genomic_DNA"/>
</dbReference>
<dbReference type="EMBL" id="CP002687">
    <property type="protein sequence ID" value="AEE84791.1"/>
    <property type="molecule type" value="Genomic_DNA"/>
</dbReference>
<dbReference type="EMBL" id="CP002687">
    <property type="protein sequence ID" value="ANM67087.1"/>
    <property type="molecule type" value="Genomic_DNA"/>
</dbReference>
<dbReference type="EMBL" id="CP002687">
    <property type="protein sequence ID" value="ANM67088.1"/>
    <property type="molecule type" value="Genomic_DNA"/>
</dbReference>
<dbReference type="EMBL" id="AY059864">
    <property type="protein sequence ID" value="AAL24346.1"/>
    <property type="molecule type" value="mRNA"/>
</dbReference>
<dbReference type="EMBL" id="BT008496">
    <property type="protein sequence ID" value="AAP37855.1"/>
    <property type="molecule type" value="mRNA"/>
</dbReference>
<dbReference type="PIR" id="T05598">
    <property type="entry name" value="T05598"/>
</dbReference>
<dbReference type="RefSeq" id="NP_001320050.1">
    <molecule id="Q93YP7-1"/>
    <property type="nucleotide sequence ID" value="NM_001341624.1"/>
</dbReference>
<dbReference type="RefSeq" id="NP_001328939.1">
    <molecule id="Q93YP7-1"/>
    <property type="nucleotide sequence ID" value="NM_001341625.1"/>
</dbReference>
<dbReference type="RefSeq" id="NP_567688.1">
    <molecule id="Q93YP7-1"/>
    <property type="nucleotide sequence ID" value="NM_118497.4"/>
</dbReference>
<dbReference type="RefSeq" id="NP_849431.1">
    <molecule id="Q93YP7-1"/>
    <property type="nucleotide sequence ID" value="NM_179100.4"/>
</dbReference>
<dbReference type="SMR" id="Q93YP7"/>
<dbReference type="FunCoup" id="Q93YP7">
    <property type="interactions" value="2702"/>
</dbReference>
<dbReference type="STRING" id="3702.Q93YP7"/>
<dbReference type="GlyGen" id="Q93YP7">
    <property type="glycosylation" value="1 site"/>
</dbReference>
<dbReference type="PaxDb" id="3702-AT4G23660.3"/>
<dbReference type="ProteomicsDB" id="240952">
    <molecule id="Q93YP7-1"/>
</dbReference>
<dbReference type="EnsemblPlants" id="AT4G23660.1">
    <molecule id="Q93YP7-1"/>
    <property type="protein sequence ID" value="AT4G23660.1"/>
    <property type="gene ID" value="AT4G23660"/>
</dbReference>
<dbReference type="EnsemblPlants" id="AT4G23660.2">
    <molecule id="Q93YP7-1"/>
    <property type="protein sequence ID" value="AT4G23660.2"/>
    <property type="gene ID" value="AT4G23660"/>
</dbReference>
<dbReference type="EnsemblPlants" id="AT4G23660.4">
    <molecule id="Q93YP7-1"/>
    <property type="protein sequence ID" value="AT4G23660.4"/>
    <property type="gene ID" value="AT4G23660"/>
</dbReference>
<dbReference type="EnsemblPlants" id="AT4G23660.5">
    <molecule id="Q93YP7-1"/>
    <property type="protein sequence ID" value="AT4G23660.5"/>
    <property type="gene ID" value="AT4G23660"/>
</dbReference>
<dbReference type="GeneID" id="828466"/>
<dbReference type="Gramene" id="AT4G23660.1">
    <molecule id="Q93YP7-1"/>
    <property type="protein sequence ID" value="AT4G23660.1"/>
    <property type="gene ID" value="AT4G23660"/>
</dbReference>
<dbReference type="Gramene" id="AT4G23660.2">
    <molecule id="Q93YP7-1"/>
    <property type="protein sequence ID" value="AT4G23660.2"/>
    <property type="gene ID" value="AT4G23660"/>
</dbReference>
<dbReference type="Gramene" id="AT4G23660.4">
    <molecule id="Q93YP7-1"/>
    <property type="protein sequence ID" value="AT4G23660.4"/>
    <property type="gene ID" value="AT4G23660"/>
</dbReference>
<dbReference type="Gramene" id="AT4G23660.5">
    <molecule id="Q93YP7-1"/>
    <property type="protein sequence ID" value="AT4G23660.5"/>
    <property type="gene ID" value="AT4G23660"/>
</dbReference>
<dbReference type="KEGG" id="ath:AT4G23660"/>
<dbReference type="Araport" id="AT4G23660"/>
<dbReference type="TAIR" id="AT4G23660">
    <property type="gene designation" value="PPT1"/>
</dbReference>
<dbReference type="eggNOG" id="KOG1381">
    <property type="taxonomic scope" value="Eukaryota"/>
</dbReference>
<dbReference type="InParanoid" id="Q93YP7"/>
<dbReference type="PhylomeDB" id="Q93YP7"/>
<dbReference type="BioCyc" id="MetaCyc:MONOMER-17042"/>
<dbReference type="BRENDA" id="2.5.1.39">
    <property type="organism ID" value="399"/>
</dbReference>
<dbReference type="UniPathway" id="UPA00232"/>
<dbReference type="PRO" id="PR:Q93YP7"/>
<dbReference type="Proteomes" id="UP000006548">
    <property type="component" value="Chromosome 4"/>
</dbReference>
<dbReference type="ExpressionAtlas" id="Q93YP7">
    <property type="expression patterns" value="baseline and differential"/>
</dbReference>
<dbReference type="GO" id="GO:0005743">
    <property type="term" value="C:mitochondrial inner membrane"/>
    <property type="evidence" value="ECO:0007669"/>
    <property type="project" value="UniProtKB-SubCell"/>
</dbReference>
<dbReference type="GO" id="GO:0008412">
    <property type="term" value="F:4-hydroxybenzoate polyprenyltransferase activity"/>
    <property type="evidence" value="ECO:0007669"/>
    <property type="project" value="UniProtKB-UniRule"/>
</dbReference>
<dbReference type="GO" id="GO:0008299">
    <property type="term" value="P:isoprenoid biosynthetic process"/>
    <property type="evidence" value="ECO:0007669"/>
    <property type="project" value="UniProtKB-UniRule"/>
</dbReference>
<dbReference type="GO" id="GO:0006744">
    <property type="term" value="P:ubiquinone biosynthetic process"/>
    <property type="evidence" value="ECO:0007669"/>
    <property type="project" value="UniProtKB-UniRule"/>
</dbReference>
<dbReference type="CDD" id="cd13959">
    <property type="entry name" value="PT_UbiA_COQ2"/>
    <property type="match status" value="1"/>
</dbReference>
<dbReference type="FunFam" id="1.20.120.1780:FF:000001">
    <property type="entry name" value="4-hydroxybenzoate octaprenyltransferase"/>
    <property type="match status" value="1"/>
</dbReference>
<dbReference type="FunFam" id="1.10.357.140:FF:000003">
    <property type="entry name" value="4-hydroxybenzoate polyprenyltransferase, mitochondrial"/>
    <property type="match status" value="1"/>
</dbReference>
<dbReference type="Gene3D" id="1.10.357.140">
    <property type="entry name" value="UbiA prenyltransferase"/>
    <property type="match status" value="1"/>
</dbReference>
<dbReference type="Gene3D" id="1.20.120.1780">
    <property type="entry name" value="UbiA prenyltransferase"/>
    <property type="match status" value="1"/>
</dbReference>
<dbReference type="HAMAP" id="MF_01635">
    <property type="entry name" value="UbiA"/>
    <property type="match status" value="1"/>
</dbReference>
<dbReference type="InterPro" id="IPR006370">
    <property type="entry name" value="HB_polyprenyltransferase-like"/>
</dbReference>
<dbReference type="InterPro" id="IPR039653">
    <property type="entry name" value="Prenyltransferase"/>
</dbReference>
<dbReference type="InterPro" id="IPR000537">
    <property type="entry name" value="UbiA_prenyltransferase"/>
</dbReference>
<dbReference type="InterPro" id="IPR030470">
    <property type="entry name" value="UbiA_prenylTrfase_CS"/>
</dbReference>
<dbReference type="InterPro" id="IPR044878">
    <property type="entry name" value="UbiA_sf"/>
</dbReference>
<dbReference type="NCBIfam" id="TIGR01474">
    <property type="entry name" value="ubiA_proteo"/>
    <property type="match status" value="1"/>
</dbReference>
<dbReference type="PANTHER" id="PTHR11048:SF28">
    <property type="entry name" value="4-HYDROXYBENZOATE POLYPRENYLTRANSFERASE, MITOCHONDRIAL"/>
    <property type="match status" value="1"/>
</dbReference>
<dbReference type="PANTHER" id="PTHR11048">
    <property type="entry name" value="PRENYLTRANSFERASES"/>
    <property type="match status" value="1"/>
</dbReference>
<dbReference type="Pfam" id="PF01040">
    <property type="entry name" value="UbiA"/>
    <property type="match status" value="1"/>
</dbReference>
<dbReference type="PROSITE" id="PS00943">
    <property type="entry name" value="UBIA"/>
    <property type="match status" value="1"/>
</dbReference>
<sequence>MAFFGLSRVSRRLLKSSVSVTPSSSSALLQSQHKSLSNPVTTHYTNPFTKCYPSWNDNYQVWSKGRELHQEKFFGVGWNYRLICGMSSSSSVLEGKPKKDDKEKSDGVVVKEASWIDLYLPEEVRGYAKLARLDKPIGTWLLAWPCMWSIALAADPGSLPSFKYMALFGCGALLLRGAGCTINDLLDQDIDTKVDRTKLRPIASGLLTPFQGIGFLGLQLLLGLGILLQLNNYSRVLGASSLLLVFSYPLMKRFTFWPQAFLGLTINWGALLGWTAVKGSIAPSIVLPLYLSGVCWTLVYDTIYAHQDKEDDVKVGVKSTALRFGDNTKLWLTGFGTASIGFLALSGFSADLGWQYYASLAAASGQLGWQIGTADLSSGADCSRKFVSNKWFGAIIFSGVVLGRSFQ</sequence>
<name>COQ2_ARATH</name>
<keyword id="KW-0025">Alternative splicing</keyword>
<keyword id="KW-0414">Isoprene biosynthesis</keyword>
<keyword id="KW-0472">Membrane</keyword>
<keyword id="KW-0496">Mitochondrion</keyword>
<keyword id="KW-0999">Mitochondrion inner membrane</keyword>
<keyword id="KW-1185">Reference proteome</keyword>
<keyword id="KW-0808">Transferase</keyword>
<keyword id="KW-0809">Transit peptide</keyword>
<keyword id="KW-0812">Transmembrane</keyword>
<keyword id="KW-1133">Transmembrane helix</keyword>
<keyword id="KW-0831">Ubiquinone biosynthesis</keyword>
<accession>Q93YP7</accession>
<accession>Q9FRU7</accession>
<accession>Q9SUR1</accession>
<protein>
    <recommendedName>
        <fullName evidence="1">4-hydroxybenzoate polyprenyltransferase, mitochondrial</fullName>
        <shortName evidence="1">4-HB polyprenyltransferase</shortName>
        <shortName>4HPT</shortName>
        <ecNumber evidence="1">2.5.1.39</ecNumber>
    </recommendedName>
    <alternativeName>
        <fullName evidence="1">4-hydroxybenzoate nonaprenyltransferase</fullName>
    </alternativeName>
    <alternativeName>
        <fullName evidence="1">Para-hydroxybenzoate--polyprenyltransferase</fullName>
        <shortName evidence="1">PHB:PPT</shortName>
        <shortName evidence="1">PHB:polyprenyltransferase</shortName>
    </alternativeName>
    <alternativeName>
        <fullName>Polyprenyltransferase 1</fullName>
        <shortName>AtPPT1</shortName>
    </alternativeName>
</protein>
<evidence type="ECO:0000255" key="1">
    <source>
        <dbReference type="HAMAP-Rule" id="MF_03189"/>
    </source>
</evidence>
<evidence type="ECO:0000269" key="2">
    <source>
    </source>
</evidence>
<evidence type="ECO:0000305" key="3"/>
<feature type="transit peptide" description="Mitochondrion" evidence="1">
    <location>
        <begin position="1"/>
        <end position="20"/>
    </location>
</feature>
<feature type="chain" id="PRO_0000405435" description="4-hydroxybenzoate polyprenyltransferase, mitochondrial" evidence="1">
    <location>
        <begin position="21"/>
        <end position="407"/>
    </location>
</feature>
<feature type="transmembrane region" description="Helical" evidence="1">
    <location>
        <begin position="137"/>
        <end position="157"/>
    </location>
</feature>
<feature type="transmembrane region" description="Helical" evidence="1">
    <location>
        <begin position="162"/>
        <end position="182"/>
    </location>
</feature>
<feature type="transmembrane region" description="Helical" evidence="1">
    <location>
        <begin position="210"/>
        <end position="230"/>
    </location>
</feature>
<feature type="transmembrane region" description="Helical" evidence="1">
    <location>
        <begin position="254"/>
        <end position="274"/>
    </location>
</feature>
<feature type="transmembrane region" description="Helical" evidence="1">
    <location>
        <begin position="279"/>
        <end position="299"/>
    </location>
</feature>
<feature type="transmembrane region" description="Helical" evidence="1">
    <location>
        <begin position="330"/>
        <end position="350"/>
    </location>
</feature>
<comment type="function">
    <text evidence="1 2">Catalyzes the prenylation of para-hydroxybenzoate (PHB) with an all-trans polyprenyl group. Mediates the second step in the final reaction sequence of coenzyme Q (CoQ) biosynthesis, which is the condensation of the polyisoprenoid side chain with PHB, generating the first membrane-bound Q intermediate. Required for embryo development.</text>
</comment>
<comment type="catalytic activity">
    <reaction evidence="1">
        <text>an all-trans-polyprenyl diphosphate + 4-hydroxybenzoate = a 4-hydroxy-3-(all-trans-polyprenyl)benzoate + diphosphate</text>
        <dbReference type="Rhea" id="RHEA:44504"/>
        <dbReference type="Rhea" id="RHEA-COMP:9514"/>
        <dbReference type="Rhea" id="RHEA-COMP:9564"/>
        <dbReference type="ChEBI" id="CHEBI:17879"/>
        <dbReference type="ChEBI" id="CHEBI:33019"/>
        <dbReference type="ChEBI" id="CHEBI:58914"/>
        <dbReference type="ChEBI" id="CHEBI:78396"/>
        <dbReference type="EC" id="2.5.1.39"/>
    </reaction>
</comment>
<comment type="cofactor">
    <cofactor evidence="1">
        <name>Mg(2+)</name>
        <dbReference type="ChEBI" id="CHEBI:18420"/>
    </cofactor>
</comment>
<comment type="pathway">
    <text evidence="1">Cofactor biosynthesis; ubiquinone biosynthesis.</text>
</comment>
<comment type="subcellular location">
    <subcellularLocation>
        <location evidence="1 2">Mitochondrion inner membrane</location>
        <topology evidence="1">Multi-pass membrane protein</topology>
        <orientation evidence="1">Matrix side</orientation>
    </subcellularLocation>
</comment>
<comment type="alternative products">
    <event type="alternative splicing"/>
    <isoform>
        <id>Q93YP7-1</id>
        <name>1</name>
        <sequence type="displayed"/>
    </isoform>
    <text>A number of isoforms are produced. According to EST sequences.</text>
</comment>
<comment type="tissue specificity">
    <text evidence="2">Expressed in flowers.</text>
</comment>
<comment type="disruption phenotype">
    <text evidence="2">Arrest of embryo development at an early stage of zygotic embryogenesis.</text>
</comment>
<comment type="similarity">
    <text evidence="1">Belongs to the UbiA prenyltransferase family.</text>
</comment>
<comment type="sequence caution" evidence="3">
    <conflict type="erroneous gene model prediction">
        <sequence resource="EMBL-CDS" id="CAA23032"/>
    </conflict>
</comment>
<comment type="sequence caution" evidence="3">
    <conflict type="erroneous gene model prediction">
        <sequence resource="EMBL-CDS" id="CAB79321"/>
    </conflict>
</comment>
<organism>
    <name type="scientific">Arabidopsis thaliana</name>
    <name type="common">Mouse-ear cress</name>
    <dbReference type="NCBI Taxonomy" id="3702"/>
    <lineage>
        <taxon>Eukaryota</taxon>
        <taxon>Viridiplantae</taxon>
        <taxon>Streptophyta</taxon>
        <taxon>Embryophyta</taxon>
        <taxon>Tracheophyta</taxon>
        <taxon>Spermatophyta</taxon>
        <taxon>Magnoliopsida</taxon>
        <taxon>eudicotyledons</taxon>
        <taxon>Gunneridae</taxon>
        <taxon>Pentapetalae</taxon>
        <taxon>rosids</taxon>
        <taxon>malvids</taxon>
        <taxon>Brassicales</taxon>
        <taxon>Brassicaceae</taxon>
        <taxon>Camelineae</taxon>
        <taxon>Arabidopsis</taxon>
    </lineage>
</organism>
<reference key="1">
    <citation type="journal article" date="2004" name="Plant Mol. Biol.">
        <title>The AtPPT1 gene encoding 4-hydroxybenzoate polyprenyl diphosphate transferase in ubiquinone biosynthesis is required for embryo development in Arabidopsis thaliana.</title>
        <authorList>
            <person name="Okada K."/>
            <person name="Ohara K."/>
            <person name="Yazaki K."/>
            <person name="Nozaki K."/>
            <person name="Uchida N."/>
            <person name="Kawamukai M."/>
            <person name="Nojiri H."/>
            <person name="Yamane H."/>
        </authorList>
    </citation>
    <scope>NUCLEOTIDE SEQUENCE [MRNA]</scope>
    <scope>FUNCTION</scope>
    <scope>SUBCELLULAR LOCATION</scope>
    <scope>TISSUE SPECIFICITY</scope>
    <scope>DISRUPTION PHENOTYPE</scope>
    <source>
        <strain>cv. Wassilewskija-2</strain>
    </source>
</reference>
<reference key="2">
    <citation type="journal article" date="1999" name="Nature">
        <title>Sequence and analysis of chromosome 4 of the plant Arabidopsis thaliana.</title>
        <authorList>
            <person name="Mayer K.F.X."/>
            <person name="Schueller C."/>
            <person name="Wambutt R."/>
            <person name="Murphy G."/>
            <person name="Volckaert G."/>
            <person name="Pohl T."/>
            <person name="Duesterhoeft A."/>
            <person name="Stiekema W."/>
            <person name="Entian K.-D."/>
            <person name="Terryn N."/>
            <person name="Harris B."/>
            <person name="Ansorge W."/>
            <person name="Brandt P."/>
            <person name="Grivell L.A."/>
            <person name="Rieger M."/>
            <person name="Weichselgartner M."/>
            <person name="de Simone V."/>
            <person name="Obermaier B."/>
            <person name="Mache R."/>
            <person name="Mueller M."/>
            <person name="Kreis M."/>
            <person name="Delseny M."/>
            <person name="Puigdomenech P."/>
            <person name="Watson M."/>
            <person name="Schmidtheini T."/>
            <person name="Reichert B."/>
            <person name="Portetelle D."/>
            <person name="Perez-Alonso M."/>
            <person name="Boutry M."/>
            <person name="Bancroft I."/>
            <person name="Vos P."/>
            <person name="Hoheisel J."/>
            <person name="Zimmermann W."/>
            <person name="Wedler H."/>
            <person name="Ridley P."/>
            <person name="Langham S.-A."/>
            <person name="McCullagh B."/>
            <person name="Bilham L."/>
            <person name="Robben J."/>
            <person name="van der Schueren J."/>
            <person name="Grymonprez B."/>
            <person name="Chuang Y.-J."/>
            <person name="Vandenbussche F."/>
            <person name="Braeken M."/>
            <person name="Weltjens I."/>
            <person name="Voet M."/>
            <person name="Bastiaens I."/>
            <person name="Aert R."/>
            <person name="Defoor E."/>
            <person name="Weitzenegger T."/>
            <person name="Bothe G."/>
            <person name="Ramsperger U."/>
            <person name="Hilbert H."/>
            <person name="Braun M."/>
            <person name="Holzer E."/>
            <person name="Brandt A."/>
            <person name="Peters S."/>
            <person name="van Staveren M."/>
            <person name="Dirkse W."/>
            <person name="Mooijman P."/>
            <person name="Klein Lankhorst R."/>
            <person name="Rose M."/>
            <person name="Hauf J."/>
            <person name="Koetter P."/>
            <person name="Berneiser S."/>
            <person name="Hempel S."/>
            <person name="Feldpausch M."/>
            <person name="Lamberth S."/>
            <person name="Van den Daele H."/>
            <person name="De Keyser A."/>
            <person name="Buysshaert C."/>
            <person name="Gielen J."/>
            <person name="Villarroel R."/>
            <person name="De Clercq R."/>
            <person name="van Montagu M."/>
            <person name="Rogers J."/>
            <person name="Cronin A."/>
            <person name="Quail M.A."/>
            <person name="Bray-Allen S."/>
            <person name="Clark L."/>
            <person name="Doggett J."/>
            <person name="Hall S."/>
            <person name="Kay M."/>
            <person name="Lennard N."/>
            <person name="McLay K."/>
            <person name="Mayes R."/>
            <person name="Pettett A."/>
            <person name="Rajandream M.A."/>
            <person name="Lyne M."/>
            <person name="Benes V."/>
            <person name="Rechmann S."/>
            <person name="Borkova D."/>
            <person name="Bloecker H."/>
            <person name="Scharfe M."/>
            <person name="Grimm M."/>
            <person name="Loehnert T.-H."/>
            <person name="Dose S."/>
            <person name="de Haan M."/>
            <person name="Maarse A.C."/>
            <person name="Schaefer M."/>
            <person name="Mueller-Auer S."/>
            <person name="Gabel C."/>
            <person name="Fuchs M."/>
            <person name="Fartmann B."/>
            <person name="Granderath K."/>
            <person name="Dauner D."/>
            <person name="Herzl A."/>
            <person name="Neumann S."/>
            <person name="Argiriou A."/>
            <person name="Vitale D."/>
            <person name="Liguori R."/>
            <person name="Piravandi E."/>
            <person name="Massenet O."/>
            <person name="Quigley F."/>
            <person name="Clabauld G."/>
            <person name="Muendlein A."/>
            <person name="Felber R."/>
            <person name="Schnabl S."/>
            <person name="Hiller R."/>
            <person name="Schmidt W."/>
            <person name="Lecharny A."/>
            <person name="Aubourg S."/>
            <person name="Chefdor F."/>
            <person name="Cooke R."/>
            <person name="Berger C."/>
            <person name="Monfort A."/>
            <person name="Casacuberta E."/>
            <person name="Gibbons T."/>
            <person name="Weber N."/>
            <person name="Vandenbol M."/>
            <person name="Bargues M."/>
            <person name="Terol J."/>
            <person name="Torres A."/>
            <person name="Perez-Perez A."/>
            <person name="Purnelle B."/>
            <person name="Bent E."/>
            <person name="Johnson S."/>
            <person name="Tacon D."/>
            <person name="Jesse T."/>
            <person name="Heijnen L."/>
            <person name="Schwarz S."/>
            <person name="Scholler P."/>
            <person name="Heber S."/>
            <person name="Francs P."/>
            <person name="Bielke C."/>
            <person name="Frishman D."/>
            <person name="Haase D."/>
            <person name="Lemcke K."/>
            <person name="Mewes H.-W."/>
            <person name="Stocker S."/>
            <person name="Zaccaria P."/>
            <person name="Bevan M."/>
            <person name="Wilson R.K."/>
            <person name="de la Bastide M."/>
            <person name="Habermann K."/>
            <person name="Parnell L."/>
            <person name="Dedhia N."/>
            <person name="Gnoj L."/>
            <person name="Schutz K."/>
            <person name="Huang E."/>
            <person name="Spiegel L."/>
            <person name="Sekhon M."/>
            <person name="Murray J."/>
            <person name="Sheet P."/>
            <person name="Cordes M."/>
            <person name="Abu-Threideh J."/>
            <person name="Stoneking T."/>
            <person name="Kalicki J."/>
            <person name="Graves T."/>
            <person name="Harmon G."/>
            <person name="Edwards J."/>
            <person name="Latreille P."/>
            <person name="Courtney L."/>
            <person name="Cloud J."/>
            <person name="Abbott A."/>
            <person name="Scott K."/>
            <person name="Johnson D."/>
            <person name="Minx P."/>
            <person name="Bentley D."/>
            <person name="Fulton B."/>
            <person name="Miller N."/>
            <person name="Greco T."/>
            <person name="Kemp K."/>
            <person name="Kramer J."/>
            <person name="Fulton L."/>
            <person name="Mardis E."/>
            <person name="Dante M."/>
            <person name="Pepin K."/>
            <person name="Hillier L.W."/>
            <person name="Nelson J."/>
            <person name="Spieth J."/>
            <person name="Ryan E."/>
            <person name="Andrews S."/>
            <person name="Geisel C."/>
            <person name="Layman D."/>
            <person name="Du H."/>
            <person name="Ali J."/>
            <person name="Berghoff A."/>
            <person name="Jones K."/>
            <person name="Drone K."/>
            <person name="Cotton M."/>
            <person name="Joshu C."/>
            <person name="Antonoiu B."/>
            <person name="Zidanic M."/>
            <person name="Strong C."/>
            <person name="Sun H."/>
            <person name="Lamar B."/>
            <person name="Yordan C."/>
            <person name="Ma P."/>
            <person name="Zhong J."/>
            <person name="Preston R."/>
            <person name="Vil D."/>
            <person name="Shekher M."/>
            <person name="Matero A."/>
            <person name="Shah R."/>
            <person name="Swaby I.K."/>
            <person name="O'Shaughnessy A."/>
            <person name="Rodriguez M."/>
            <person name="Hoffman J."/>
            <person name="Till S."/>
            <person name="Granat S."/>
            <person name="Shohdy N."/>
            <person name="Hasegawa A."/>
            <person name="Hameed A."/>
            <person name="Lodhi M."/>
            <person name="Johnson A."/>
            <person name="Chen E."/>
            <person name="Marra M.A."/>
            <person name="Martienssen R."/>
            <person name="McCombie W.R."/>
        </authorList>
    </citation>
    <scope>NUCLEOTIDE SEQUENCE [LARGE SCALE GENOMIC DNA]</scope>
    <source>
        <strain>cv. Columbia</strain>
    </source>
</reference>
<reference key="3">
    <citation type="journal article" date="2017" name="Plant J.">
        <title>Araport11: a complete reannotation of the Arabidopsis thaliana reference genome.</title>
        <authorList>
            <person name="Cheng C.Y."/>
            <person name="Krishnakumar V."/>
            <person name="Chan A.P."/>
            <person name="Thibaud-Nissen F."/>
            <person name="Schobel S."/>
            <person name="Town C.D."/>
        </authorList>
    </citation>
    <scope>GENOME REANNOTATION</scope>
    <source>
        <strain>cv. Columbia</strain>
    </source>
</reference>
<reference key="4">
    <citation type="journal article" date="2003" name="Science">
        <title>Empirical analysis of transcriptional activity in the Arabidopsis genome.</title>
        <authorList>
            <person name="Yamada K."/>
            <person name="Lim J."/>
            <person name="Dale J.M."/>
            <person name="Chen H."/>
            <person name="Shinn P."/>
            <person name="Palm C.J."/>
            <person name="Southwick A.M."/>
            <person name="Wu H.C."/>
            <person name="Kim C.J."/>
            <person name="Nguyen M."/>
            <person name="Pham P.K."/>
            <person name="Cheuk R.F."/>
            <person name="Karlin-Newmann G."/>
            <person name="Liu S.X."/>
            <person name="Lam B."/>
            <person name="Sakano H."/>
            <person name="Wu T."/>
            <person name="Yu G."/>
            <person name="Miranda M."/>
            <person name="Quach H.L."/>
            <person name="Tripp M."/>
            <person name="Chang C.H."/>
            <person name="Lee J.M."/>
            <person name="Toriumi M.J."/>
            <person name="Chan M.M."/>
            <person name="Tang C.C."/>
            <person name="Onodera C.S."/>
            <person name="Deng J.M."/>
            <person name="Akiyama K."/>
            <person name="Ansari Y."/>
            <person name="Arakawa T."/>
            <person name="Banh J."/>
            <person name="Banno F."/>
            <person name="Bowser L."/>
            <person name="Brooks S.Y."/>
            <person name="Carninci P."/>
            <person name="Chao Q."/>
            <person name="Choy N."/>
            <person name="Enju A."/>
            <person name="Goldsmith A.D."/>
            <person name="Gurjal M."/>
            <person name="Hansen N.F."/>
            <person name="Hayashizaki Y."/>
            <person name="Johnson-Hopson C."/>
            <person name="Hsuan V.W."/>
            <person name="Iida K."/>
            <person name="Karnes M."/>
            <person name="Khan S."/>
            <person name="Koesema E."/>
            <person name="Ishida J."/>
            <person name="Jiang P.X."/>
            <person name="Jones T."/>
            <person name="Kawai J."/>
            <person name="Kamiya A."/>
            <person name="Meyers C."/>
            <person name="Nakajima M."/>
            <person name="Narusaka M."/>
            <person name="Seki M."/>
            <person name="Sakurai T."/>
            <person name="Satou M."/>
            <person name="Tamse R."/>
            <person name="Vaysberg M."/>
            <person name="Wallender E.K."/>
            <person name="Wong C."/>
            <person name="Yamamura Y."/>
            <person name="Yuan S."/>
            <person name="Shinozaki K."/>
            <person name="Davis R.W."/>
            <person name="Theologis A."/>
            <person name="Ecker J.R."/>
        </authorList>
    </citation>
    <scope>NUCLEOTIDE SEQUENCE [LARGE SCALE MRNA]</scope>
    <source>
        <strain>cv. Columbia</strain>
    </source>
</reference>
<proteinExistence type="evidence at transcript level"/>
<gene>
    <name evidence="1" type="primary">PPT1</name>
    <name type="ordered locus">At4g23660</name>
    <name type="ORF">F9D16.130</name>
</gene>